<sequence>MSASTQGRRIVVVGAGVGGLAAAARLAHQGFDVQVFEKTQGPGGRCNRLQVDGFTWDLGPTIVLMPEVFEETFRAVGRRIEDYLTLLRCDPNYRVHFRDRSDVTFTSELCAMGRELERVEPGSYARYLAFLAQGRVQYRTSLDHLVGRNYAGLRDYLSPRVLARIFQVRAHRRMYADVSRFFQDERLRAAMTFQTMYLGVSPYASPAVYGLLPFTELGVGIWFPKGGLYAIPQALERLAREEGVRFHYGAPVERILTDGGRTRGVRLEGGEVVEADAVLCNADLPYAYEKLLDPKATTLKRKEKLRYTSSGYMLYLGMKRRYPELLHHNVVFGRDYKGSFDDIFEFRVPEDPSFYVNAPTRTDASLAPEGKDALYVLVPVPHQHPDLDWKVEGPKVRAKFFARMAELGFPSLESDIEVERRSSTPDDWAGTFNLARGSGFGLSQNFTQIGPFRPSNQDARVKNLFFVGASTQPGTGLPTVLISARLVTERLMTWAHAQGVSLSPRTAAATPLEGVAA</sequence>
<proteinExistence type="evidence at protein level"/>
<comment type="function">
    <text evidence="2 3">Dehydrogenates carotenes in the cis conformation: has cis-to-trans isomerase activity and mediates dehydrogenation of cis-phytoene, producing zeta-carotene via the intermediary of phytofluene by the symmetrical introduction of 2 double bonds at the C-11 and C-11' positions of phytoene.</text>
</comment>
<comment type="catalytic activity">
    <reaction evidence="2">
        <text>15-cis-phytoene + 2 A = all-trans-zeta-carotene + 2 AH2</text>
        <dbReference type="Rhea" id="RHEA:30615"/>
        <dbReference type="ChEBI" id="CHEBI:13193"/>
        <dbReference type="ChEBI" id="CHEBI:17499"/>
        <dbReference type="ChEBI" id="CHEBI:27787"/>
        <dbReference type="ChEBI" id="CHEBI:28068"/>
        <dbReference type="EC" id="1.3.99.29"/>
    </reaction>
</comment>
<comment type="cofactor">
    <cofactor evidence="4">
        <name>FAD</name>
        <dbReference type="ChEBI" id="CHEBI:57692"/>
    </cofactor>
</comment>
<comment type="pathway">
    <text evidence="2">Carotenoid biosynthesis; lycopene biosynthesis.</text>
</comment>
<comment type="similarity">
    <text evidence="4">Belongs to the carotenoid/retinoid oxidoreductase family.</text>
</comment>
<keyword id="KW-0125">Carotenoid biosynthesis</keyword>
<keyword id="KW-0274">FAD</keyword>
<keyword id="KW-0285">Flavoprotein</keyword>
<keyword id="KW-0520">NAD</keyword>
<keyword id="KW-0560">Oxidoreductase</keyword>
<dbReference type="EC" id="1.3.99.29"/>
<dbReference type="EMBL" id="Z21955">
    <property type="protein sequence ID" value="CAA79956.1"/>
    <property type="molecule type" value="Genomic_DNA"/>
</dbReference>
<dbReference type="PIR" id="S32169">
    <property type="entry name" value="S32169"/>
</dbReference>
<dbReference type="SMR" id="P54979"/>
<dbReference type="BioCyc" id="MetaCyc:MONOMER-16379"/>
<dbReference type="UniPathway" id="UPA00803"/>
<dbReference type="GO" id="GO:0016627">
    <property type="term" value="F:oxidoreductase activity, acting on the CH-CH group of donors"/>
    <property type="evidence" value="ECO:0000314"/>
    <property type="project" value="UniProtKB"/>
</dbReference>
<dbReference type="GO" id="GO:0016117">
    <property type="term" value="P:carotenoid biosynthetic process"/>
    <property type="evidence" value="ECO:0000314"/>
    <property type="project" value="UniProtKB"/>
</dbReference>
<dbReference type="FunFam" id="3.50.50.60:FF:000528">
    <property type="entry name" value="Phytoene desaturase"/>
    <property type="match status" value="1"/>
</dbReference>
<dbReference type="FunFam" id="3.50.50.60:FF:000171">
    <property type="entry name" value="zeta-carotene-forming phytoene desaturase"/>
    <property type="match status" value="1"/>
</dbReference>
<dbReference type="Gene3D" id="3.50.50.60">
    <property type="entry name" value="FAD/NAD(P)-binding domain"/>
    <property type="match status" value="2"/>
</dbReference>
<dbReference type="InterPro" id="IPR002937">
    <property type="entry name" value="Amino_oxidase"/>
</dbReference>
<dbReference type="InterPro" id="IPR014105">
    <property type="entry name" value="Carotenoid/retinoid_OxRdtase"/>
</dbReference>
<dbReference type="InterPro" id="IPR036188">
    <property type="entry name" value="FAD/NAD-bd_sf"/>
</dbReference>
<dbReference type="InterPro" id="IPR008150">
    <property type="entry name" value="Phytoene_DH_bac_CS"/>
</dbReference>
<dbReference type="NCBIfam" id="TIGR02734">
    <property type="entry name" value="crtI_fam"/>
    <property type="match status" value="1"/>
</dbReference>
<dbReference type="PANTHER" id="PTHR43734">
    <property type="entry name" value="PHYTOENE DESATURASE"/>
    <property type="match status" value="1"/>
</dbReference>
<dbReference type="PANTHER" id="PTHR43734:SF1">
    <property type="entry name" value="PHYTOENE DESATURASE"/>
    <property type="match status" value="1"/>
</dbReference>
<dbReference type="Pfam" id="PF01593">
    <property type="entry name" value="Amino_oxidase"/>
    <property type="match status" value="1"/>
</dbReference>
<dbReference type="PRINTS" id="PR00419">
    <property type="entry name" value="ADXRDTASE"/>
</dbReference>
<dbReference type="SUPFAM" id="SSF51905">
    <property type="entry name" value="FAD/NAD(P)-binding domain"/>
    <property type="match status" value="1"/>
</dbReference>
<dbReference type="PROSITE" id="PS00982">
    <property type="entry name" value="PHYTOENE_DH"/>
    <property type="match status" value="1"/>
</dbReference>
<evidence type="ECO:0000255" key="1"/>
<evidence type="ECO:0000269" key="2">
    <source>
    </source>
</evidence>
<evidence type="ECO:0000269" key="3">
    <source>
    </source>
</evidence>
<evidence type="ECO:0000305" key="4"/>
<protein>
    <recommendedName>
        <fullName>zeta-carotene-forming phytoene desaturase</fullName>
        <ecNumber>1.3.99.29</ecNumber>
    </recommendedName>
    <alternativeName>
        <fullName>2-step phytoene desaturase</fullName>
    </alternativeName>
</protein>
<organism>
    <name type="scientific">Myxococcus xanthus</name>
    <dbReference type="NCBI Taxonomy" id="34"/>
    <lineage>
        <taxon>Bacteria</taxon>
        <taxon>Pseudomonadati</taxon>
        <taxon>Myxococcota</taxon>
        <taxon>Myxococcia</taxon>
        <taxon>Myxococcales</taxon>
        <taxon>Cystobacterineae</taxon>
        <taxon>Myxococcaceae</taxon>
        <taxon>Myxococcus</taxon>
    </lineage>
</organism>
<feature type="chain" id="PRO_0000067689" description="zeta-carotene-forming phytoene desaturase">
    <location>
        <begin position="1"/>
        <end position="517"/>
    </location>
</feature>
<feature type="binding site" evidence="1">
    <location>
        <begin position="11"/>
        <end position="44"/>
    </location>
    <ligand>
        <name>FAD</name>
        <dbReference type="ChEBI" id="CHEBI:57692"/>
    </ligand>
</feature>
<reference key="1">
    <citation type="journal article" date="1995" name="Eur. J. Biochem.">
        <title>A cluster of structural and regulatory genes for light-induced carotenogenesis in Myxococcus xanthus.</title>
        <authorList>
            <person name="Botella J.A."/>
            <person name="Murillo F.J."/>
            <person name="Ruiz-Vazquez R.M."/>
        </authorList>
    </citation>
    <scope>NUCLEOTIDE SEQUENCE [GENOMIC DNA]</scope>
    <scope>FUNCTION</scope>
    <source>
        <strain>DK1050</strain>
    </source>
</reference>
<reference key="2">
    <citation type="journal article" date="2007" name="FEBS J.">
        <title>Cooperation of two carotene desaturases in the production of lycopene in Myxococcus xanthus.</title>
        <authorList>
            <person name="Iniesta A.A."/>
            <person name="Cervantes M."/>
            <person name="Murillo F.J."/>
        </authorList>
    </citation>
    <scope>FUNCTION</scope>
    <scope>PATHWAY</scope>
    <scope>CATALYTIC ACTIVITY</scope>
</reference>
<gene>
    <name type="primary">carA2</name>
    <name type="synonym">crtIa</name>
</gene>
<name>CRTJ_MYXXA</name>
<accession>P54979</accession>